<sequence length="359" mass="42142">MTLESIMACCLSEEAKEARRINDEIERQLRRDKRDARRELKLLLLGTGESGKSTFIKQMRIIHGSGYSDEDKRGFTKLVYQNIFTAMQAMIRAMDTLKIPYKYEHNKAHAQLVREVDVEKVSAFENPYVDAIKSLWNDPGIQECYDRRREYQLSDSTKYYLNDLDRVADPAYLPTQQDVLRVRVPTTGIIEYPFDLQSVIFRMVDVGGQRSERRKWIHCFENVTSIMFLVALSEYDQVLVESDNENRMEESKALFRTIITYPWFQNSSVILFLNKKDLLEEKIMYSHLVDYFPEYDGPQRDAQAAREFILKMFVDLNPDSDKIIYSHFTCATDTENIRFVFAAVKDTILQLNLKEYNLV</sequence>
<comment type="function">
    <text evidence="1 2">Guanine nucleotide-binding proteins (G proteins) function as transducers downstream of G protein-coupled receptors (GPCRs) in numerous signaling cascades. The alpha chain contains the guanine nucleotide binding site and alternates between an active, GTP-bound state and an inactive, GDP-bound state. Signaling by an activated GPCR promotes GDP release and GTP binding. The alpha subunit has a low GTPase activity that converts bound GTP to GDP, thereby terminating the signal. Both GDP release and GTP hydrolysis are modulated by numerous regulatory proteins. Signaling is mediated via phospholipase C-beta-dependent inositol lipid hydrolysis for signal propagation: activates phospholipase C-beta: following GPCR activation, GNAQ activates PLC-beta (PLCB1, PLCB2, PLCB3 or PLCB4), leading to production of diacylglycerol (DAG) and inositol 1,4,5-trisphosphate (IP3). Required for platelet activation. Regulates B-cell selection and survival and is required to prevent B-cell-dependent autoimmunity. Regulates chemotaxis of BM-derived neutrophils and dendritic cells (in vitro) (By similarity). Transduces FFAR4 signaling in response to long-chain fatty acids (LCFAs) (By similarity). Together with GNA11, required for heart development (By similarity).</text>
</comment>
<comment type="catalytic activity">
    <reaction evidence="1">
        <text>GTP + H2O = GDP + phosphate + H(+)</text>
        <dbReference type="Rhea" id="RHEA:19669"/>
        <dbReference type="ChEBI" id="CHEBI:15377"/>
        <dbReference type="ChEBI" id="CHEBI:15378"/>
        <dbReference type="ChEBI" id="CHEBI:37565"/>
        <dbReference type="ChEBI" id="CHEBI:43474"/>
        <dbReference type="ChEBI" id="CHEBI:58189"/>
    </reaction>
    <physiologicalReaction direction="left-to-right" evidence="1">
        <dbReference type="Rhea" id="RHEA:19670"/>
    </physiologicalReaction>
</comment>
<comment type="subunit">
    <text evidence="2">G proteins are composed of 3 units; alpha, beta and gamma. The alpha chain contains the guanine nucleotide binding site. Interacts (GDP-bound form) with RIC8A (via C-terminus); promoting GNAQ folding and association with the plasma membrane. Binds NHERF1. Forms a complex with PECAM1 and BDKRB2. Interacts with GAS2L2.</text>
</comment>
<comment type="subcellular location">
    <subcellularLocation>
        <location evidence="2">Cell membrane</location>
        <topology evidence="2">Lipid-anchor</topology>
    </subcellularLocation>
    <subcellularLocation>
        <location evidence="2">Golgi apparatus</location>
    </subcellularLocation>
    <subcellularLocation>
        <location evidence="1">Nucleus</location>
    </subcellularLocation>
    <subcellularLocation>
        <location evidence="1">Nucleus membrane</location>
    </subcellularLocation>
    <text evidence="1">Colocalizes with the adrenergic receptors, ADREN1A and ADREN1B, at the nuclear membrane of cardiac myocytes.</text>
</comment>
<comment type="PTM">
    <text evidence="1">Palmitoylated by ZDHHC3 and ZDHHC7. Palmitoylation occurs in the Golgi and participates in the localization of GNAQ to the plasma membrane.</text>
</comment>
<comment type="PTM">
    <text evidence="1">Histaminylated at Gln-209 residues by TGM2.</text>
</comment>
<comment type="similarity">
    <text evidence="4">Belongs to the G-alpha family. G(q) subfamily.</text>
</comment>
<accession>Q2PKF4</accession>
<gene>
    <name type="primary">GNAQ</name>
</gene>
<protein>
    <recommendedName>
        <fullName>Guanine nucleotide-binding protein G(q) subunit alpha</fullName>
        <ecNumber evidence="1">3.6.5.-</ecNumber>
    </recommendedName>
    <alternativeName>
        <fullName>Guanine nucleotide-binding protein alpha-q</fullName>
    </alternativeName>
</protein>
<name>GNAQ_PIG</name>
<feature type="chain" id="PRO_0000231027" description="Guanine nucleotide-binding protein G(q) subunit alpha">
    <location>
        <begin position="1"/>
        <end position="359"/>
    </location>
</feature>
<feature type="domain" description="G-alpha" evidence="3">
    <location>
        <begin position="38"/>
        <end position="359"/>
    </location>
</feature>
<feature type="region of interest" description="G1 motif" evidence="3">
    <location>
        <begin position="41"/>
        <end position="54"/>
    </location>
</feature>
<feature type="region of interest" description="G2 motif" evidence="3">
    <location>
        <begin position="178"/>
        <end position="186"/>
    </location>
</feature>
<feature type="region of interest" description="G3 motif" evidence="3">
    <location>
        <begin position="201"/>
        <end position="210"/>
    </location>
</feature>
<feature type="region of interest" description="G4 motif" evidence="3">
    <location>
        <begin position="270"/>
        <end position="277"/>
    </location>
</feature>
<feature type="region of interest" description="G5 motif" evidence="3">
    <location>
        <begin position="329"/>
        <end position="334"/>
    </location>
</feature>
<feature type="binding site" evidence="1">
    <location>
        <position position="50"/>
    </location>
    <ligand>
        <name>GTP</name>
        <dbReference type="ChEBI" id="CHEBI:37565"/>
    </ligand>
</feature>
<feature type="binding site" evidence="1">
    <location>
        <position position="51"/>
    </location>
    <ligand>
        <name>GTP</name>
        <dbReference type="ChEBI" id="CHEBI:37565"/>
    </ligand>
</feature>
<feature type="binding site" evidence="1">
    <location>
        <position position="52"/>
    </location>
    <ligand>
        <name>GTP</name>
        <dbReference type="ChEBI" id="CHEBI:37565"/>
    </ligand>
</feature>
<feature type="binding site" evidence="1">
    <location>
        <position position="53"/>
    </location>
    <ligand>
        <name>GTP</name>
        <dbReference type="ChEBI" id="CHEBI:37565"/>
    </ligand>
</feature>
<feature type="binding site" evidence="1">
    <location>
        <position position="53"/>
    </location>
    <ligand>
        <name>Mg(2+)</name>
        <dbReference type="ChEBI" id="CHEBI:18420"/>
    </ligand>
</feature>
<feature type="binding site" evidence="1">
    <location>
        <position position="54"/>
    </location>
    <ligand>
        <name>GTP</name>
        <dbReference type="ChEBI" id="CHEBI:37565"/>
    </ligand>
</feature>
<feature type="binding site" evidence="1">
    <location>
        <position position="156"/>
    </location>
    <ligand>
        <name>GTP</name>
        <dbReference type="ChEBI" id="CHEBI:37565"/>
    </ligand>
</feature>
<feature type="binding site" evidence="1">
    <location>
        <position position="180"/>
    </location>
    <ligand>
        <name>GTP</name>
        <dbReference type="ChEBI" id="CHEBI:37565"/>
    </ligand>
</feature>
<feature type="binding site" evidence="1">
    <location>
        <position position="181"/>
    </location>
    <ligand>
        <name>GTP</name>
        <dbReference type="ChEBI" id="CHEBI:37565"/>
    </ligand>
</feature>
<feature type="binding site" evidence="1">
    <location>
        <position position="183"/>
    </location>
    <ligand>
        <name>GTP</name>
        <dbReference type="ChEBI" id="CHEBI:37565"/>
    </ligand>
</feature>
<feature type="binding site" evidence="1">
    <location>
        <position position="186"/>
    </location>
    <ligand>
        <name>Mg(2+)</name>
        <dbReference type="ChEBI" id="CHEBI:18420"/>
    </ligand>
</feature>
<feature type="binding site" evidence="1">
    <location>
        <position position="274"/>
    </location>
    <ligand>
        <name>GTP</name>
        <dbReference type="ChEBI" id="CHEBI:37565"/>
    </ligand>
</feature>
<feature type="binding site" evidence="1">
    <location>
        <position position="275"/>
    </location>
    <ligand>
        <name>GTP</name>
        <dbReference type="ChEBI" id="CHEBI:37565"/>
    </ligand>
</feature>
<feature type="binding site" evidence="1">
    <location>
        <position position="277"/>
    </location>
    <ligand>
        <name>GTP</name>
        <dbReference type="ChEBI" id="CHEBI:37565"/>
    </ligand>
</feature>
<feature type="binding site" evidence="1">
    <location>
        <position position="331"/>
    </location>
    <ligand>
        <name>GTP</name>
        <dbReference type="ChEBI" id="CHEBI:37565"/>
    </ligand>
</feature>
<feature type="modified residue" description="5-glutamyl histamine" evidence="1">
    <location>
        <position position="209"/>
    </location>
</feature>
<feature type="lipid moiety-binding region" description="S-palmitoyl cysteine" evidence="1">
    <location>
        <position position="9"/>
    </location>
</feature>
<feature type="lipid moiety-binding region" description="S-palmitoyl cysteine" evidence="1">
    <location>
        <position position="10"/>
    </location>
</feature>
<dbReference type="EC" id="3.6.5.-" evidence="1"/>
<dbReference type="EMBL" id="DQ319976">
    <property type="protein sequence ID" value="ABC48673.1"/>
    <property type="molecule type" value="mRNA"/>
</dbReference>
<dbReference type="RefSeq" id="NP_001033712.1">
    <property type="nucleotide sequence ID" value="NM_001038623.1"/>
</dbReference>
<dbReference type="SMR" id="Q2PKF4"/>
<dbReference type="FunCoup" id="Q2PKF4">
    <property type="interactions" value="1428"/>
</dbReference>
<dbReference type="STRING" id="9823.ENSSSCP00000035584"/>
<dbReference type="PeptideAtlas" id="Q2PKF4"/>
<dbReference type="Ensembl" id="ENSSSCT00000057300.3">
    <property type="protein sequence ID" value="ENSSSCP00000035584.1"/>
    <property type="gene ID" value="ENSSSCG00000033763.3"/>
</dbReference>
<dbReference type="Ensembl" id="ENSSSCT00015085276.1">
    <property type="protein sequence ID" value="ENSSSCP00015034663.1"/>
    <property type="gene ID" value="ENSSSCG00015063631.1"/>
</dbReference>
<dbReference type="Ensembl" id="ENSSSCT00025053338.1">
    <property type="protein sequence ID" value="ENSSSCP00025022708.1"/>
    <property type="gene ID" value="ENSSSCG00025039281.1"/>
</dbReference>
<dbReference type="Ensembl" id="ENSSSCT00030104035.1">
    <property type="protein sequence ID" value="ENSSSCP00030048165.1"/>
    <property type="gene ID" value="ENSSSCG00030074191.1"/>
</dbReference>
<dbReference type="Ensembl" id="ENSSSCT00035034745.1">
    <property type="protein sequence ID" value="ENSSSCP00035013766.1"/>
    <property type="gene ID" value="ENSSSCG00035026343.1"/>
</dbReference>
<dbReference type="Ensembl" id="ENSSSCT00040040089.1">
    <property type="protein sequence ID" value="ENSSSCP00040016812.1"/>
    <property type="gene ID" value="ENSSSCG00040029798.1"/>
</dbReference>
<dbReference type="Ensembl" id="ENSSSCT00045027985.1">
    <property type="protein sequence ID" value="ENSSSCP00045019354.1"/>
    <property type="gene ID" value="ENSSSCG00045016461.1"/>
</dbReference>
<dbReference type="Ensembl" id="ENSSSCT00050028388.1">
    <property type="protein sequence ID" value="ENSSSCP00050011751.1"/>
    <property type="gene ID" value="ENSSSCG00050021046.1"/>
</dbReference>
<dbReference type="Ensembl" id="ENSSSCT00060067903.1">
    <property type="protein sequence ID" value="ENSSSCP00060029143.1"/>
    <property type="gene ID" value="ENSSSCG00060049962.1"/>
</dbReference>
<dbReference type="Ensembl" id="ENSSSCT00065105909.1">
    <property type="protein sequence ID" value="ENSSSCP00065047033.1"/>
    <property type="gene ID" value="ENSSSCG00065076669.1"/>
</dbReference>
<dbReference type="Ensembl" id="ENSSSCT00070056520.1">
    <property type="protein sequence ID" value="ENSSSCP00070048016.1"/>
    <property type="gene ID" value="ENSSSCG00070028177.1"/>
</dbReference>
<dbReference type="Ensembl" id="ENSSSCT00105037919">
    <property type="protein sequence ID" value="ENSSSCP00105026378"/>
    <property type="gene ID" value="ENSSSCG00105019826"/>
</dbReference>
<dbReference type="Ensembl" id="ENSSSCT00115004191">
    <property type="protein sequence ID" value="ENSSSCP00115003865"/>
    <property type="gene ID" value="ENSSSCG00115002515"/>
</dbReference>
<dbReference type="GeneID" id="654405"/>
<dbReference type="KEGG" id="ssc:654405"/>
<dbReference type="CTD" id="2776"/>
<dbReference type="VGNC" id="VGNC:103100">
    <property type="gene designation" value="GNAQ"/>
</dbReference>
<dbReference type="eggNOG" id="KOG0085">
    <property type="taxonomic scope" value="Eukaryota"/>
</dbReference>
<dbReference type="GeneTree" id="ENSGT00940000161347"/>
<dbReference type="InParanoid" id="Q2PKF4"/>
<dbReference type="OMA" id="FMAIQAM"/>
<dbReference type="OrthoDB" id="5817230at2759"/>
<dbReference type="Reactome" id="R-SSC-112043">
    <property type="pathway name" value="PLC beta mediated events"/>
</dbReference>
<dbReference type="Reactome" id="R-SSC-202040">
    <property type="pathway name" value="G-protein activation"/>
</dbReference>
<dbReference type="Reactome" id="R-SSC-399997">
    <property type="pathway name" value="Acetylcholine regulates insulin secretion"/>
</dbReference>
<dbReference type="Reactome" id="R-SSC-416476">
    <property type="pathway name" value="G alpha (q) signalling events"/>
</dbReference>
<dbReference type="Reactome" id="R-SSC-418592">
    <property type="pathway name" value="ADP signalling through P2Y purinoceptor 1"/>
</dbReference>
<dbReference type="Reactome" id="R-SSC-428930">
    <property type="pathway name" value="Thromboxane signalling through TP receptor"/>
</dbReference>
<dbReference type="Reactome" id="R-SSC-434316">
    <property type="pathway name" value="Fatty Acids bound to GPR40 (FFAR1) regulate insulin secretion"/>
</dbReference>
<dbReference type="Reactome" id="R-SSC-456926">
    <property type="pathway name" value="Thrombin signalling through proteinase activated receptors (PARs)"/>
</dbReference>
<dbReference type="Reactome" id="R-SSC-6814122">
    <property type="pathway name" value="Cooperation of PDCL (PhLP1) and TRiC/CCT in G-protein beta folding"/>
</dbReference>
<dbReference type="Reactome" id="R-SSC-9856530">
    <property type="pathway name" value="High laminar flow shear stress activates signaling by PIEZO1 and PECAM1:CDH5:KDR in endothelial cells"/>
</dbReference>
<dbReference type="Reactome" id="R-SSC-9860927">
    <property type="pathway name" value="Turbulent (oscillatory, disturbed) flow shear stress activates signaling by PIEZO1 and integrins in endothelial cells"/>
</dbReference>
<dbReference type="ChiTaRS" id="GNAQ">
    <property type="organism name" value="pig"/>
</dbReference>
<dbReference type="Proteomes" id="UP000008227">
    <property type="component" value="Chromosome 1"/>
</dbReference>
<dbReference type="Proteomes" id="UP000314985">
    <property type="component" value="Chromosome 1"/>
</dbReference>
<dbReference type="Proteomes" id="UP000694570">
    <property type="component" value="Unplaced"/>
</dbReference>
<dbReference type="Proteomes" id="UP000694571">
    <property type="component" value="Unplaced"/>
</dbReference>
<dbReference type="Proteomes" id="UP000694720">
    <property type="component" value="Unplaced"/>
</dbReference>
<dbReference type="Proteomes" id="UP000694722">
    <property type="component" value="Unplaced"/>
</dbReference>
<dbReference type="Proteomes" id="UP000694723">
    <property type="component" value="Unplaced"/>
</dbReference>
<dbReference type="Proteomes" id="UP000694724">
    <property type="component" value="Unplaced"/>
</dbReference>
<dbReference type="Proteomes" id="UP000694725">
    <property type="component" value="Unplaced"/>
</dbReference>
<dbReference type="Proteomes" id="UP000694726">
    <property type="component" value="Unplaced"/>
</dbReference>
<dbReference type="Proteomes" id="UP000694727">
    <property type="component" value="Unplaced"/>
</dbReference>
<dbReference type="Proteomes" id="UP000694728">
    <property type="component" value="Unplaced"/>
</dbReference>
<dbReference type="Bgee" id="ENSSSCG00000033763">
    <property type="expression patterns" value="Expressed in Ammon's horn and 43 other cell types or tissues"/>
</dbReference>
<dbReference type="GO" id="GO:0005737">
    <property type="term" value="C:cytoplasm"/>
    <property type="evidence" value="ECO:0000318"/>
    <property type="project" value="GO_Central"/>
</dbReference>
<dbReference type="GO" id="GO:0005794">
    <property type="term" value="C:Golgi apparatus"/>
    <property type="evidence" value="ECO:0007669"/>
    <property type="project" value="UniProtKB-SubCell"/>
</dbReference>
<dbReference type="GO" id="GO:0005834">
    <property type="term" value="C:heterotrimeric G-protein complex"/>
    <property type="evidence" value="ECO:0000318"/>
    <property type="project" value="GO_Central"/>
</dbReference>
<dbReference type="GO" id="GO:0016020">
    <property type="term" value="C:membrane"/>
    <property type="evidence" value="ECO:0000250"/>
    <property type="project" value="AgBase"/>
</dbReference>
<dbReference type="GO" id="GO:0031965">
    <property type="term" value="C:nuclear membrane"/>
    <property type="evidence" value="ECO:0007669"/>
    <property type="project" value="UniProtKB-SubCell"/>
</dbReference>
<dbReference type="GO" id="GO:0001750">
    <property type="term" value="C:photoreceptor outer segment"/>
    <property type="evidence" value="ECO:0000250"/>
    <property type="project" value="AgBase"/>
</dbReference>
<dbReference type="GO" id="GO:0099524">
    <property type="term" value="C:postsynaptic cytosol"/>
    <property type="evidence" value="ECO:0007669"/>
    <property type="project" value="Ensembl"/>
</dbReference>
<dbReference type="GO" id="GO:0003925">
    <property type="term" value="F:G protein activity"/>
    <property type="evidence" value="ECO:0007669"/>
    <property type="project" value="Ensembl"/>
</dbReference>
<dbReference type="GO" id="GO:0001664">
    <property type="term" value="F:G protein-coupled receptor binding"/>
    <property type="evidence" value="ECO:0000318"/>
    <property type="project" value="GO_Central"/>
</dbReference>
<dbReference type="GO" id="GO:0031683">
    <property type="term" value="F:G-protein beta/gamma-subunit complex binding"/>
    <property type="evidence" value="ECO:0000318"/>
    <property type="project" value="GO_Central"/>
</dbReference>
<dbReference type="GO" id="GO:0005525">
    <property type="term" value="F:GTP binding"/>
    <property type="evidence" value="ECO:0007669"/>
    <property type="project" value="UniProtKB-KW"/>
</dbReference>
<dbReference type="GO" id="GO:0005096">
    <property type="term" value="F:GTPase activator activity"/>
    <property type="evidence" value="ECO:0000318"/>
    <property type="project" value="GO_Central"/>
</dbReference>
<dbReference type="GO" id="GO:0003924">
    <property type="term" value="F:GTPase activity"/>
    <property type="evidence" value="ECO:0000318"/>
    <property type="project" value="GO_Central"/>
</dbReference>
<dbReference type="GO" id="GO:0046872">
    <property type="term" value="F:metal ion binding"/>
    <property type="evidence" value="ECO:0007669"/>
    <property type="project" value="UniProtKB-KW"/>
</dbReference>
<dbReference type="GO" id="GO:0007189">
    <property type="term" value="P:adenylate cyclase-activating G protein-coupled receptor signaling pathway"/>
    <property type="evidence" value="ECO:0000318"/>
    <property type="project" value="GO_Central"/>
</dbReference>
<dbReference type="GO" id="GO:0009649">
    <property type="term" value="P:entrainment of circadian clock"/>
    <property type="evidence" value="ECO:0000250"/>
    <property type="project" value="AgBase"/>
</dbReference>
<dbReference type="GO" id="GO:0007213">
    <property type="term" value="P:G protein-coupled acetylcholine receptor signaling pathway"/>
    <property type="evidence" value="ECO:0000250"/>
    <property type="project" value="AgBase"/>
</dbReference>
<dbReference type="GO" id="GO:0007215">
    <property type="term" value="P:glutamate receptor signaling pathway"/>
    <property type="evidence" value="ECO:0000318"/>
    <property type="project" value="GO_Central"/>
</dbReference>
<dbReference type="GO" id="GO:0007218">
    <property type="term" value="P:neuropeptide signaling pathway"/>
    <property type="evidence" value="ECO:0007669"/>
    <property type="project" value="Ensembl"/>
</dbReference>
<dbReference type="GO" id="GO:0007206">
    <property type="term" value="P:phospholipase C-activating G protein-coupled glutamate receptor signaling pathway"/>
    <property type="evidence" value="ECO:0007669"/>
    <property type="project" value="Ensembl"/>
</dbReference>
<dbReference type="GO" id="GO:0007208">
    <property type="term" value="P:phospholipase C-activating serotonin receptor signaling pathway"/>
    <property type="evidence" value="ECO:0007669"/>
    <property type="project" value="Ensembl"/>
</dbReference>
<dbReference type="GO" id="GO:0007603">
    <property type="term" value="P:phototransduction, visible light"/>
    <property type="evidence" value="ECO:0000250"/>
    <property type="project" value="AgBase"/>
</dbReference>
<dbReference type="GO" id="GO:0050821">
    <property type="term" value="P:protein stabilization"/>
    <property type="evidence" value="ECO:0007669"/>
    <property type="project" value="Ensembl"/>
</dbReference>
<dbReference type="GO" id="GO:0060828">
    <property type="term" value="P:regulation of canonical Wnt signaling pathway"/>
    <property type="evidence" value="ECO:0007669"/>
    <property type="project" value="Ensembl"/>
</dbReference>
<dbReference type="GO" id="GO:0010543">
    <property type="term" value="P:regulation of platelet activation"/>
    <property type="evidence" value="ECO:0000250"/>
    <property type="project" value="UniProtKB"/>
</dbReference>
<dbReference type="GO" id="GO:0034695">
    <property type="term" value="P:response to prostaglandin E"/>
    <property type="evidence" value="ECO:0007669"/>
    <property type="project" value="Ensembl"/>
</dbReference>
<dbReference type="CDD" id="cd00066">
    <property type="entry name" value="G-alpha"/>
    <property type="match status" value="1"/>
</dbReference>
<dbReference type="FunFam" id="3.40.50.300:FF:003977">
    <property type="entry name" value="Guanine nucleotide-binding protein G(q) subunit alpha"/>
    <property type="match status" value="1"/>
</dbReference>
<dbReference type="FunFam" id="1.10.400.10:FF:000002">
    <property type="entry name" value="guanine nucleotide-binding protein G(Q) subunit alpha"/>
    <property type="match status" value="1"/>
</dbReference>
<dbReference type="FunFam" id="3.40.50.300:FF:000692">
    <property type="entry name" value="Guanine nucleotide-binding protein subunit alpha"/>
    <property type="match status" value="1"/>
</dbReference>
<dbReference type="Gene3D" id="1.10.400.10">
    <property type="entry name" value="GI Alpha 1, domain 2-like"/>
    <property type="match status" value="1"/>
</dbReference>
<dbReference type="Gene3D" id="3.40.50.300">
    <property type="entry name" value="P-loop containing nucleotide triphosphate hydrolases"/>
    <property type="match status" value="1"/>
</dbReference>
<dbReference type="InterPro" id="IPR000654">
    <property type="entry name" value="Gprotein_alpha_Q"/>
</dbReference>
<dbReference type="InterPro" id="IPR001019">
    <property type="entry name" value="Gprotein_alpha_su"/>
</dbReference>
<dbReference type="InterPro" id="IPR011025">
    <property type="entry name" value="GproteinA_insert"/>
</dbReference>
<dbReference type="InterPro" id="IPR027417">
    <property type="entry name" value="P-loop_NTPase"/>
</dbReference>
<dbReference type="PANTHER" id="PTHR10218">
    <property type="entry name" value="GTP-BINDING PROTEIN ALPHA SUBUNIT"/>
    <property type="match status" value="1"/>
</dbReference>
<dbReference type="PANTHER" id="PTHR10218:SF329">
    <property type="entry name" value="GUANINE NUCLEOTIDE-BINDING PROTEIN G(Q) SUBUNIT ALPHA"/>
    <property type="match status" value="1"/>
</dbReference>
<dbReference type="Pfam" id="PF00503">
    <property type="entry name" value="G-alpha"/>
    <property type="match status" value="1"/>
</dbReference>
<dbReference type="PRINTS" id="PR00318">
    <property type="entry name" value="GPROTEINA"/>
</dbReference>
<dbReference type="PRINTS" id="PR00442">
    <property type="entry name" value="GPROTEINAQ"/>
</dbReference>
<dbReference type="SMART" id="SM00275">
    <property type="entry name" value="G_alpha"/>
    <property type="match status" value="1"/>
</dbReference>
<dbReference type="SUPFAM" id="SSF52540">
    <property type="entry name" value="P-loop containing nucleoside triphosphate hydrolases"/>
    <property type="match status" value="1"/>
</dbReference>
<dbReference type="SUPFAM" id="SSF47895">
    <property type="entry name" value="Transducin (alpha subunit), insertion domain"/>
    <property type="match status" value="1"/>
</dbReference>
<dbReference type="PROSITE" id="PS51882">
    <property type="entry name" value="G_ALPHA"/>
    <property type="match status" value="1"/>
</dbReference>
<reference key="1">
    <citation type="submission" date="2005-12" db="EMBL/GenBank/DDBJ databases">
        <title>Sus scrofa guanine nucleotide-binding protein alpha q mRNA.</title>
        <authorList>
            <person name="Yao W."/>
            <person name="Yang Z."/>
        </authorList>
    </citation>
    <scope>NUCLEOTIDE SEQUENCE [MRNA]</scope>
</reference>
<organism>
    <name type="scientific">Sus scrofa</name>
    <name type="common">Pig</name>
    <dbReference type="NCBI Taxonomy" id="9823"/>
    <lineage>
        <taxon>Eukaryota</taxon>
        <taxon>Metazoa</taxon>
        <taxon>Chordata</taxon>
        <taxon>Craniata</taxon>
        <taxon>Vertebrata</taxon>
        <taxon>Euteleostomi</taxon>
        <taxon>Mammalia</taxon>
        <taxon>Eutheria</taxon>
        <taxon>Laurasiatheria</taxon>
        <taxon>Artiodactyla</taxon>
        <taxon>Suina</taxon>
        <taxon>Suidae</taxon>
        <taxon>Sus</taxon>
    </lineage>
</organism>
<keyword id="KW-1003">Cell membrane</keyword>
<keyword id="KW-0333">Golgi apparatus</keyword>
<keyword id="KW-0342">GTP-binding</keyword>
<keyword id="KW-0378">Hydrolase</keyword>
<keyword id="KW-0449">Lipoprotein</keyword>
<keyword id="KW-0460">Magnesium</keyword>
<keyword id="KW-0472">Membrane</keyword>
<keyword id="KW-0479">Metal-binding</keyword>
<keyword id="KW-0547">Nucleotide-binding</keyword>
<keyword id="KW-0539">Nucleus</keyword>
<keyword id="KW-0564">Palmitate</keyword>
<keyword id="KW-1185">Reference proteome</keyword>
<keyword id="KW-0807">Transducer</keyword>
<evidence type="ECO:0000250" key="1">
    <source>
        <dbReference type="UniProtKB" id="P21279"/>
    </source>
</evidence>
<evidence type="ECO:0000250" key="2">
    <source>
        <dbReference type="UniProtKB" id="P50148"/>
    </source>
</evidence>
<evidence type="ECO:0000255" key="3">
    <source>
        <dbReference type="PROSITE-ProRule" id="PRU01230"/>
    </source>
</evidence>
<evidence type="ECO:0000305" key="4"/>
<proteinExistence type="evidence at transcript level"/>